<sequence>MSTSPKPVAPIHVIGGGLAGSEAAWQIAQAGVPVVLHEMRRDLPSSSGAVGPTKVRTDAHQTDGLAEMVCSNSFRSDDWQFNAVGLLHAEMRKLDSLILSAADQHQVPAGGALAVDRDGFSAEVTRRIEAHPLITIEREEVAGLPPEDWDSVVVATGPLTSPALADAILELSGEGQLSFFDAIAPIIHVESIDMDIAWRQSRYDKEGPGGDAAAYINCPMNKAQYEAFIDALLEGPKAEFKDWEHVPYFDGCLPIEVMAERGRETLRHGPMKPVGLTNPRDPTVKAYAIVQLRQDNALGTLWNMVGFQTKLKHGAQAEVFRMIPGLQNAQFARLGGLHRNTFINSPRLLDRSLRMKVAPRLRFAGQMTGVEGYVESAATGLLAGRFAAAERLGKTLDAPPPTTALGALVDHVTGGHIEGEALGKTSFQPMNINYGLLPPTETPKVGDDGVKIPMKERGRAKKRLMSLRALADLDQWMAGA</sequence>
<organism>
    <name type="scientific">Caulobacter sp. (strain K31)</name>
    <dbReference type="NCBI Taxonomy" id="366602"/>
    <lineage>
        <taxon>Bacteria</taxon>
        <taxon>Pseudomonadati</taxon>
        <taxon>Pseudomonadota</taxon>
        <taxon>Alphaproteobacteria</taxon>
        <taxon>Caulobacterales</taxon>
        <taxon>Caulobacteraceae</taxon>
        <taxon>Caulobacter</taxon>
    </lineage>
</organism>
<comment type="function">
    <text evidence="1">Catalyzes the folate-dependent formation of 5-methyl-uridine at position 54 (M-5-U54) in all tRNAs.</text>
</comment>
<comment type="catalytic activity">
    <reaction evidence="1">
        <text>uridine(54) in tRNA + (6R)-5,10-methylene-5,6,7,8-tetrahydrofolate + NADH + H(+) = 5-methyluridine(54) in tRNA + (6S)-5,6,7,8-tetrahydrofolate + NAD(+)</text>
        <dbReference type="Rhea" id="RHEA:16873"/>
        <dbReference type="Rhea" id="RHEA-COMP:10167"/>
        <dbReference type="Rhea" id="RHEA-COMP:10193"/>
        <dbReference type="ChEBI" id="CHEBI:15378"/>
        <dbReference type="ChEBI" id="CHEBI:15636"/>
        <dbReference type="ChEBI" id="CHEBI:57453"/>
        <dbReference type="ChEBI" id="CHEBI:57540"/>
        <dbReference type="ChEBI" id="CHEBI:57945"/>
        <dbReference type="ChEBI" id="CHEBI:65315"/>
        <dbReference type="ChEBI" id="CHEBI:74447"/>
        <dbReference type="EC" id="2.1.1.74"/>
    </reaction>
</comment>
<comment type="catalytic activity">
    <reaction evidence="1">
        <text>uridine(54) in tRNA + (6R)-5,10-methylene-5,6,7,8-tetrahydrofolate + NADPH + H(+) = 5-methyluridine(54) in tRNA + (6S)-5,6,7,8-tetrahydrofolate + NADP(+)</text>
        <dbReference type="Rhea" id="RHEA:62372"/>
        <dbReference type="Rhea" id="RHEA-COMP:10167"/>
        <dbReference type="Rhea" id="RHEA-COMP:10193"/>
        <dbReference type="ChEBI" id="CHEBI:15378"/>
        <dbReference type="ChEBI" id="CHEBI:15636"/>
        <dbReference type="ChEBI" id="CHEBI:57453"/>
        <dbReference type="ChEBI" id="CHEBI:57783"/>
        <dbReference type="ChEBI" id="CHEBI:58349"/>
        <dbReference type="ChEBI" id="CHEBI:65315"/>
        <dbReference type="ChEBI" id="CHEBI:74447"/>
        <dbReference type="EC" id="2.1.1.74"/>
    </reaction>
</comment>
<comment type="cofactor">
    <cofactor evidence="1">
        <name>FAD</name>
        <dbReference type="ChEBI" id="CHEBI:57692"/>
    </cofactor>
</comment>
<comment type="subcellular location">
    <subcellularLocation>
        <location evidence="1">Cytoplasm</location>
    </subcellularLocation>
</comment>
<comment type="similarity">
    <text evidence="1">Belongs to the MnmG family. TrmFO subfamily.</text>
</comment>
<name>TRMFO_CAUSK</name>
<reference key="1">
    <citation type="submission" date="2008-01" db="EMBL/GenBank/DDBJ databases">
        <title>Complete sequence of chromosome of Caulobacter sp. K31.</title>
        <authorList>
            <consortium name="US DOE Joint Genome Institute"/>
            <person name="Copeland A."/>
            <person name="Lucas S."/>
            <person name="Lapidus A."/>
            <person name="Barry K."/>
            <person name="Glavina del Rio T."/>
            <person name="Dalin E."/>
            <person name="Tice H."/>
            <person name="Pitluck S."/>
            <person name="Bruce D."/>
            <person name="Goodwin L."/>
            <person name="Thompson L.S."/>
            <person name="Brettin T."/>
            <person name="Detter J.C."/>
            <person name="Han C."/>
            <person name="Schmutz J."/>
            <person name="Larimer F."/>
            <person name="Land M."/>
            <person name="Hauser L."/>
            <person name="Kyrpides N."/>
            <person name="Kim E."/>
            <person name="Stephens C."/>
            <person name="Richardson P."/>
        </authorList>
    </citation>
    <scope>NUCLEOTIDE SEQUENCE [LARGE SCALE GENOMIC DNA]</scope>
    <source>
        <strain>K31</strain>
    </source>
</reference>
<protein>
    <recommendedName>
        <fullName evidence="1">Methylenetetrahydrofolate--tRNA-(uracil-5-)-methyltransferase TrmFO</fullName>
        <ecNumber evidence="1">2.1.1.74</ecNumber>
    </recommendedName>
    <alternativeName>
        <fullName evidence="1">Folate-dependent tRNA (uracil-5-)-methyltransferase</fullName>
    </alternativeName>
    <alternativeName>
        <fullName evidence="1">Folate-dependent tRNA(M-5-U54)-methyltransferase</fullName>
    </alternativeName>
</protein>
<dbReference type="EC" id="2.1.1.74" evidence="1"/>
<dbReference type="EMBL" id="CP000927">
    <property type="protein sequence ID" value="ABZ72829.1"/>
    <property type="molecule type" value="Genomic_DNA"/>
</dbReference>
<dbReference type="SMR" id="B0T866"/>
<dbReference type="STRING" id="366602.Caul_3702"/>
<dbReference type="KEGG" id="cak:Caul_3702"/>
<dbReference type="eggNOG" id="COG1206">
    <property type="taxonomic scope" value="Bacteria"/>
</dbReference>
<dbReference type="HOGENOM" id="CLU_033057_1_0_5"/>
<dbReference type="OrthoDB" id="9803114at2"/>
<dbReference type="GO" id="GO:0005829">
    <property type="term" value="C:cytosol"/>
    <property type="evidence" value="ECO:0007669"/>
    <property type="project" value="TreeGrafter"/>
</dbReference>
<dbReference type="GO" id="GO:0050660">
    <property type="term" value="F:flavin adenine dinucleotide binding"/>
    <property type="evidence" value="ECO:0007669"/>
    <property type="project" value="UniProtKB-UniRule"/>
</dbReference>
<dbReference type="GO" id="GO:0047151">
    <property type="term" value="F:tRNA (uracil(54)-C5)-methyltransferase activity, 5,10-methylenetetrahydrofolate-dependent"/>
    <property type="evidence" value="ECO:0007669"/>
    <property type="project" value="UniProtKB-UniRule"/>
</dbReference>
<dbReference type="GO" id="GO:0030488">
    <property type="term" value="P:tRNA methylation"/>
    <property type="evidence" value="ECO:0007669"/>
    <property type="project" value="TreeGrafter"/>
</dbReference>
<dbReference type="GO" id="GO:0002098">
    <property type="term" value="P:tRNA wobble uridine modification"/>
    <property type="evidence" value="ECO:0007669"/>
    <property type="project" value="TreeGrafter"/>
</dbReference>
<dbReference type="Gene3D" id="3.50.50.60">
    <property type="entry name" value="FAD/NAD(P)-binding domain"/>
    <property type="match status" value="2"/>
</dbReference>
<dbReference type="HAMAP" id="MF_01037">
    <property type="entry name" value="TrmFO"/>
    <property type="match status" value="1"/>
</dbReference>
<dbReference type="InterPro" id="IPR036188">
    <property type="entry name" value="FAD/NAD-bd_sf"/>
</dbReference>
<dbReference type="InterPro" id="IPR002218">
    <property type="entry name" value="MnmG-rel"/>
</dbReference>
<dbReference type="InterPro" id="IPR020595">
    <property type="entry name" value="MnmG-rel_CS"/>
</dbReference>
<dbReference type="InterPro" id="IPR040131">
    <property type="entry name" value="MnmG_N"/>
</dbReference>
<dbReference type="InterPro" id="IPR004417">
    <property type="entry name" value="TrmFO"/>
</dbReference>
<dbReference type="NCBIfam" id="TIGR00137">
    <property type="entry name" value="gid_trmFO"/>
    <property type="match status" value="1"/>
</dbReference>
<dbReference type="NCBIfam" id="NF003739">
    <property type="entry name" value="PRK05335.1"/>
    <property type="match status" value="1"/>
</dbReference>
<dbReference type="PANTHER" id="PTHR11806">
    <property type="entry name" value="GLUCOSE INHIBITED DIVISION PROTEIN A"/>
    <property type="match status" value="1"/>
</dbReference>
<dbReference type="PANTHER" id="PTHR11806:SF2">
    <property type="entry name" value="METHYLENETETRAHYDROFOLATE--TRNA-(URACIL-5-)-METHYLTRANSFERASE TRMFO"/>
    <property type="match status" value="1"/>
</dbReference>
<dbReference type="Pfam" id="PF01134">
    <property type="entry name" value="GIDA"/>
    <property type="match status" value="1"/>
</dbReference>
<dbReference type="SUPFAM" id="SSF51905">
    <property type="entry name" value="FAD/NAD(P)-binding domain"/>
    <property type="match status" value="1"/>
</dbReference>
<dbReference type="PROSITE" id="PS01281">
    <property type="entry name" value="GIDA_2"/>
    <property type="match status" value="1"/>
</dbReference>
<proteinExistence type="inferred from homology"/>
<feature type="chain" id="PRO_0000346329" description="Methylenetetrahydrofolate--tRNA-(uracil-5-)-methyltransferase TrmFO">
    <location>
        <begin position="1"/>
        <end position="480"/>
    </location>
</feature>
<feature type="binding site" evidence="1">
    <location>
        <begin position="15"/>
        <end position="20"/>
    </location>
    <ligand>
        <name>FAD</name>
        <dbReference type="ChEBI" id="CHEBI:57692"/>
    </ligand>
</feature>
<gene>
    <name evidence="1" type="primary">trmFO</name>
    <name type="ordered locus">Caul_3702</name>
</gene>
<evidence type="ECO:0000255" key="1">
    <source>
        <dbReference type="HAMAP-Rule" id="MF_01037"/>
    </source>
</evidence>
<accession>B0T866</accession>
<keyword id="KW-0963">Cytoplasm</keyword>
<keyword id="KW-0274">FAD</keyword>
<keyword id="KW-0285">Flavoprotein</keyword>
<keyword id="KW-0489">Methyltransferase</keyword>
<keyword id="KW-0520">NAD</keyword>
<keyword id="KW-0521">NADP</keyword>
<keyword id="KW-0808">Transferase</keyword>
<keyword id="KW-0819">tRNA processing</keyword>